<keyword id="KW-0324">Glycolysis</keyword>
<keyword id="KW-0560">Oxidoreductase</keyword>
<keyword id="KW-0786">Thiamine pyrophosphate</keyword>
<feature type="chain" id="PRO_1000164356" description="2-oxoglutarate dehydrogenase E1 component">
    <location>
        <begin position="1"/>
        <end position="955"/>
    </location>
</feature>
<proteinExistence type="inferred from homology"/>
<reference key="1">
    <citation type="submission" date="2009-04" db="EMBL/GenBank/DDBJ databases">
        <title>Genome sequence of Bacillus anthracis A0248.</title>
        <authorList>
            <person name="Dodson R.J."/>
            <person name="Munk A.C."/>
            <person name="Bruce D."/>
            <person name="Detter C."/>
            <person name="Tapia R."/>
            <person name="Sutton G."/>
            <person name="Sims D."/>
            <person name="Brettin T."/>
        </authorList>
    </citation>
    <scope>NUCLEOTIDE SEQUENCE [LARGE SCALE GENOMIC DNA]</scope>
    <source>
        <strain>A0248</strain>
    </source>
</reference>
<sequence>MTRKNTTTNPWAKFHGPNLGYVIEQYDLYVTGAGSVDPELQELFEIFGAPSFQDDVVTGDNTATHFSPQNTGNIEKILKVVQLVEQIRSFGHTLAHINPMEDAANGQSLLEKAMNELSDADLKAIPAKTVWQDAPEGIHTALDVIHRLKEVYTQSLAYEFSHIQDSEERAWLHQMVESNSLRQPLSNKKRTALLKRLTAVEGFEQFLHKTFVGQKRFSIEGVDMLVPVLDEIVLEGAKNGVEDVMIGMAHRGRLSVLAHVLEKPYSHMFAEFKHAKIEGAVANSGWTGDVKYHLGREQVVSNEEVSTRVTLANNPSHLEFVNPVVEGFARAAQENRKKSGLPEQDTSKSFVILVHGDAAFPGQGIVSETLNLSRLNAYQTGGTIHVIANNAVGFTTDSYDSRSTKYSSDLAKGFDIPIVHVNADDPEACLAAANLAIQYRMLFKKDFLIDLIGYRRYGHNEMDDPAVTQPQVYKKIKNHPTVRAIYADQLQAAGVLNADEIETITQFTQEQLKSDYAQVPPADTSDATIHVKVPDVVAKGIQPIDTGVELDSLRAINEGLLSWPEGFNVYPKVKKILERRKDALEENGKIEWALAESLAFASILQEGTPIRLTGQDSQRGTFAHRHIVLHDTDTNETYSPLHRLPNINASFSVHNSPLSEAAVVGYEYGYNVFAPETLVMWEAQYGDFSNTAQALFDQYVSAGRAKWGQKSGLVLLLPHGYEGQGPEHSSARPERFLQLAAENNWTVANLTSAAQYFHILRRQASILGTEAVRPLVLMTPKSLLRHPLTLSTANQLSEGRFQPALEQENLGTKPNKVKRLVLSTGKMAIDLAAEIESGRHEYNLDEIHIVRIEQLYPFPAEKVQSIIKRFKNLEEIIWVQEEPRNMGAWHYMAPILFELAGDKVKTGYIGRPDRSSPSGGDPFAHKAEQELIVSHALDVKYNFRQDKLEIEVFSN</sequence>
<accession>C3P487</accession>
<organism>
    <name type="scientific">Bacillus anthracis (strain A0248)</name>
    <dbReference type="NCBI Taxonomy" id="592021"/>
    <lineage>
        <taxon>Bacteria</taxon>
        <taxon>Bacillati</taxon>
        <taxon>Bacillota</taxon>
        <taxon>Bacilli</taxon>
        <taxon>Bacillales</taxon>
        <taxon>Bacillaceae</taxon>
        <taxon>Bacillus</taxon>
        <taxon>Bacillus cereus group</taxon>
    </lineage>
</organism>
<gene>
    <name evidence="1" type="primary">odhA</name>
    <name type="ordered locus">BAA_1344</name>
</gene>
<evidence type="ECO:0000255" key="1">
    <source>
        <dbReference type="HAMAP-Rule" id="MF_01169"/>
    </source>
</evidence>
<name>ODO1_BACAA</name>
<protein>
    <recommendedName>
        <fullName evidence="1">2-oxoglutarate dehydrogenase E1 component</fullName>
        <ecNumber evidence="1">1.2.4.2</ecNumber>
    </recommendedName>
    <alternativeName>
        <fullName evidence="1">Alpha-ketoglutarate dehydrogenase</fullName>
    </alternativeName>
</protein>
<dbReference type="EC" id="1.2.4.2" evidence="1"/>
<dbReference type="EMBL" id="CP001598">
    <property type="protein sequence ID" value="ACQ49028.1"/>
    <property type="molecule type" value="Genomic_DNA"/>
</dbReference>
<dbReference type="RefSeq" id="WP_000197146.1">
    <property type="nucleotide sequence ID" value="NC_012659.1"/>
</dbReference>
<dbReference type="SMR" id="C3P487"/>
<dbReference type="GeneID" id="45021268"/>
<dbReference type="KEGG" id="bai:BAA_1344"/>
<dbReference type="HOGENOM" id="CLU_004709_1_0_9"/>
<dbReference type="GO" id="GO:0005829">
    <property type="term" value="C:cytosol"/>
    <property type="evidence" value="ECO:0007669"/>
    <property type="project" value="TreeGrafter"/>
</dbReference>
<dbReference type="GO" id="GO:0045252">
    <property type="term" value="C:oxoglutarate dehydrogenase complex"/>
    <property type="evidence" value="ECO:0007669"/>
    <property type="project" value="TreeGrafter"/>
</dbReference>
<dbReference type="GO" id="GO:0004591">
    <property type="term" value="F:oxoglutarate dehydrogenase (succinyl-transferring) activity"/>
    <property type="evidence" value="ECO:0007669"/>
    <property type="project" value="UniProtKB-UniRule"/>
</dbReference>
<dbReference type="GO" id="GO:0030976">
    <property type="term" value="F:thiamine pyrophosphate binding"/>
    <property type="evidence" value="ECO:0007669"/>
    <property type="project" value="UniProtKB-UniRule"/>
</dbReference>
<dbReference type="GO" id="GO:0006096">
    <property type="term" value="P:glycolytic process"/>
    <property type="evidence" value="ECO:0007669"/>
    <property type="project" value="UniProtKB-UniRule"/>
</dbReference>
<dbReference type="GO" id="GO:0006099">
    <property type="term" value="P:tricarboxylic acid cycle"/>
    <property type="evidence" value="ECO:0007669"/>
    <property type="project" value="TreeGrafter"/>
</dbReference>
<dbReference type="CDD" id="cd02016">
    <property type="entry name" value="TPP_E1_OGDC_like"/>
    <property type="match status" value="1"/>
</dbReference>
<dbReference type="FunFam" id="3.40.50.11610:FF:000002">
    <property type="entry name" value="2-oxoglutarate dehydrogenase E1 component"/>
    <property type="match status" value="1"/>
</dbReference>
<dbReference type="FunFam" id="3.40.50.970:FF:000036">
    <property type="entry name" value="2-oxoglutarate dehydrogenase E1 component"/>
    <property type="match status" value="1"/>
</dbReference>
<dbReference type="Gene3D" id="3.40.50.12470">
    <property type="match status" value="1"/>
</dbReference>
<dbReference type="Gene3D" id="3.40.50.970">
    <property type="match status" value="1"/>
</dbReference>
<dbReference type="Gene3D" id="3.40.50.11610">
    <property type="entry name" value="Multifunctional 2-oxoglutarate metabolism enzyme, C-terminal domain"/>
    <property type="match status" value="1"/>
</dbReference>
<dbReference type="HAMAP" id="MF_01169">
    <property type="entry name" value="SucA_OdhA"/>
    <property type="match status" value="1"/>
</dbReference>
<dbReference type="InterPro" id="IPR011603">
    <property type="entry name" value="2oxoglutarate_DH_E1"/>
</dbReference>
<dbReference type="InterPro" id="IPR023784">
    <property type="entry name" value="2oxoglutarate_DH_E1_bac"/>
</dbReference>
<dbReference type="InterPro" id="IPR001017">
    <property type="entry name" value="DH_E1"/>
</dbReference>
<dbReference type="InterPro" id="IPR042179">
    <property type="entry name" value="KGD_C_sf"/>
</dbReference>
<dbReference type="InterPro" id="IPR031717">
    <property type="entry name" value="ODO-1/KGD_C"/>
</dbReference>
<dbReference type="InterPro" id="IPR029061">
    <property type="entry name" value="THDP-binding"/>
</dbReference>
<dbReference type="InterPro" id="IPR005475">
    <property type="entry name" value="Transketolase-like_Pyr-bd"/>
</dbReference>
<dbReference type="NCBIfam" id="TIGR00239">
    <property type="entry name" value="2oxo_dh_E1"/>
    <property type="match status" value="1"/>
</dbReference>
<dbReference type="NCBIfam" id="NF006914">
    <property type="entry name" value="PRK09404.1"/>
    <property type="match status" value="1"/>
</dbReference>
<dbReference type="NCBIfam" id="NF008907">
    <property type="entry name" value="PRK12270.1"/>
    <property type="match status" value="1"/>
</dbReference>
<dbReference type="PANTHER" id="PTHR23152:SF4">
    <property type="entry name" value="2-OXOADIPATE DEHYDROGENASE COMPLEX COMPONENT E1"/>
    <property type="match status" value="1"/>
</dbReference>
<dbReference type="PANTHER" id="PTHR23152">
    <property type="entry name" value="2-OXOGLUTARATE DEHYDROGENASE"/>
    <property type="match status" value="1"/>
</dbReference>
<dbReference type="Pfam" id="PF00676">
    <property type="entry name" value="E1_dh"/>
    <property type="match status" value="1"/>
</dbReference>
<dbReference type="Pfam" id="PF16870">
    <property type="entry name" value="OxoGdeHyase_C"/>
    <property type="match status" value="1"/>
</dbReference>
<dbReference type="Pfam" id="PF02779">
    <property type="entry name" value="Transket_pyr"/>
    <property type="match status" value="1"/>
</dbReference>
<dbReference type="PIRSF" id="PIRSF000157">
    <property type="entry name" value="Oxoglu_dh_E1"/>
    <property type="match status" value="1"/>
</dbReference>
<dbReference type="SMART" id="SM00861">
    <property type="entry name" value="Transket_pyr"/>
    <property type="match status" value="1"/>
</dbReference>
<dbReference type="SUPFAM" id="SSF52518">
    <property type="entry name" value="Thiamin diphosphate-binding fold (THDP-binding)"/>
    <property type="match status" value="2"/>
</dbReference>
<comment type="function">
    <text evidence="1">E1 component of the 2-oxoglutarate dehydrogenase (OGDH) complex which catalyzes the decarboxylation of 2-oxoglutarate, the first step in the conversion of 2-oxoglutarate to succinyl-CoA and CO(2).</text>
</comment>
<comment type="catalytic activity">
    <reaction evidence="1">
        <text>N(6)-[(R)-lipoyl]-L-lysyl-[protein] + 2-oxoglutarate + H(+) = N(6)-[(R)-S(8)-succinyldihydrolipoyl]-L-lysyl-[protein] + CO2</text>
        <dbReference type="Rhea" id="RHEA:12188"/>
        <dbReference type="Rhea" id="RHEA-COMP:10474"/>
        <dbReference type="Rhea" id="RHEA-COMP:20092"/>
        <dbReference type="ChEBI" id="CHEBI:15378"/>
        <dbReference type="ChEBI" id="CHEBI:16526"/>
        <dbReference type="ChEBI" id="CHEBI:16810"/>
        <dbReference type="ChEBI" id="CHEBI:83099"/>
        <dbReference type="ChEBI" id="CHEBI:83120"/>
        <dbReference type="EC" id="1.2.4.2"/>
    </reaction>
</comment>
<comment type="cofactor">
    <cofactor evidence="1">
        <name>thiamine diphosphate</name>
        <dbReference type="ChEBI" id="CHEBI:58937"/>
    </cofactor>
</comment>
<comment type="subunit">
    <text evidence="1">Homodimer. Part of the 2-oxoglutarate dehydrogenase (OGDH) complex composed of E1 (2-oxoglutarate dehydrogenase), E2 (dihydrolipoamide succinyltransferase) and E3 (dihydrolipoamide dehydrogenase); the complex contains multiple copies of the three enzymatic components (E1, E2 and E3).</text>
</comment>
<comment type="similarity">
    <text evidence="1">Belongs to the alpha-ketoglutarate dehydrogenase family.</text>
</comment>